<evidence type="ECO:0000250" key="1">
    <source>
        <dbReference type="UniProtKB" id="P34405"/>
    </source>
</evidence>
<evidence type="ECO:0000255" key="2"/>
<evidence type="ECO:0000269" key="3">
    <source>
    </source>
</evidence>
<evidence type="ECO:0000303" key="4">
    <source>
    </source>
</evidence>
<evidence type="ECO:0000305" key="5"/>
<evidence type="ECO:0000305" key="6">
    <source>
    </source>
</evidence>
<feature type="peptide" id="PRO_0000421558" description="Extended FMRFamide-12" evidence="3">
    <location>
        <begin position="1"/>
        <end position="15"/>
    </location>
</feature>
<feature type="unsure residue" description="L or I" evidence="3">
    <location>
        <position position="4"/>
    </location>
</feature>
<feature type="unsure residue" description="L or I" evidence="3">
    <location>
        <position position="15"/>
    </location>
</feature>
<proteinExistence type="evidence at protein level"/>
<reference evidence="5" key="1">
    <citation type="journal article" date="2012" name="Syst. Biol.">
        <title>Peptidomics-based phylogeny and biogeography of Mantophasmatodea (Hexapoda).</title>
        <authorList>
            <person name="Predel R."/>
            <person name="Neupert S."/>
            <person name="Huetteroth W."/>
            <person name="Kahnt J."/>
            <person name="Waidelich D."/>
            <person name="Roth S."/>
        </authorList>
    </citation>
    <scope>PROTEIN SEQUENCE</scope>
    <source>
        <tissue evidence="3">Thoracic perisympathetic organs</tissue>
    </source>
</reference>
<dbReference type="GO" id="GO:0005576">
    <property type="term" value="C:extracellular region"/>
    <property type="evidence" value="ECO:0007669"/>
    <property type="project" value="UniProtKB-SubCell"/>
</dbReference>
<dbReference type="GO" id="GO:0007218">
    <property type="term" value="P:neuropeptide signaling pathway"/>
    <property type="evidence" value="ECO:0007669"/>
    <property type="project" value="UniProtKB-KW"/>
</dbReference>
<organism>
    <name type="scientific">Karoophasma botterkloofense</name>
    <name type="common">Gladiator</name>
    <name type="synonym">Heel-walker</name>
    <dbReference type="NCBI Taxonomy" id="253132"/>
    <lineage>
        <taxon>Eukaryota</taxon>
        <taxon>Metazoa</taxon>
        <taxon>Ecdysozoa</taxon>
        <taxon>Arthropoda</taxon>
        <taxon>Hexapoda</taxon>
        <taxon>Insecta</taxon>
        <taxon>Pterygota</taxon>
        <taxon>Neoptera</taxon>
        <taxon>Polyneoptera</taxon>
        <taxon>Mantophasmatodea</taxon>
        <taxon>Austrophasmatidae</taxon>
        <taxon>Karoophasma</taxon>
    </lineage>
</organism>
<accession>B3A052</accession>
<protein>
    <recommendedName>
        <fullName evidence="4">Extended FMRFamide-12</fullName>
        <shortName evidence="4">FMRFa-12</shortName>
    </recommendedName>
</protein>
<comment type="function">
    <text evidence="1">FMRFamides and FMRFamide-like peptides are neuropeptides.</text>
</comment>
<comment type="subcellular location">
    <subcellularLocation>
        <location evidence="6">Secreted</location>
    </subcellularLocation>
</comment>
<comment type="similarity">
    <text evidence="2">Belongs to the FARP (FMRF amide related peptide) family.</text>
</comment>
<name>FAR12_KARBO</name>
<sequence length="15" mass="1775">SPALDDERNDNFIRL</sequence>
<keyword id="KW-0903">Direct protein sequencing</keyword>
<keyword id="KW-0527">Neuropeptide</keyword>
<keyword id="KW-0964">Secreted</keyword>